<accession>A1AG70</accession>
<feature type="chain" id="PRO_1000054779" description="Small ribosomal subunit protein uS15">
    <location>
        <begin position="1"/>
        <end position="89"/>
    </location>
</feature>
<name>RS15_ECOK1</name>
<reference key="1">
    <citation type="journal article" date="2007" name="J. Bacteriol.">
        <title>The genome sequence of avian pathogenic Escherichia coli strain O1:K1:H7 shares strong similarities with human extraintestinal pathogenic E. coli genomes.</title>
        <authorList>
            <person name="Johnson T.J."/>
            <person name="Kariyawasam S."/>
            <person name="Wannemuehler Y."/>
            <person name="Mangiamele P."/>
            <person name="Johnson S.J."/>
            <person name="Doetkott C."/>
            <person name="Skyberg J.A."/>
            <person name="Lynne A.M."/>
            <person name="Johnson J.R."/>
            <person name="Nolan L.K."/>
        </authorList>
    </citation>
    <scope>NUCLEOTIDE SEQUENCE [LARGE SCALE GENOMIC DNA]</scope>
</reference>
<evidence type="ECO:0000255" key="1">
    <source>
        <dbReference type="HAMAP-Rule" id="MF_01343"/>
    </source>
</evidence>
<evidence type="ECO:0000305" key="2"/>
<protein>
    <recommendedName>
        <fullName evidence="1">Small ribosomal subunit protein uS15</fullName>
    </recommendedName>
    <alternativeName>
        <fullName evidence="2">30S ribosomal protein S15</fullName>
    </alternativeName>
</protein>
<dbReference type="EMBL" id="CP000468">
    <property type="protein sequence ID" value="ABJ02660.1"/>
    <property type="molecule type" value="Genomic_DNA"/>
</dbReference>
<dbReference type="RefSeq" id="WP_000059466.1">
    <property type="nucleotide sequence ID" value="NZ_CADILS010000003.1"/>
</dbReference>
<dbReference type="SMR" id="A1AG70"/>
<dbReference type="GeneID" id="93778818"/>
<dbReference type="KEGG" id="ecv:APECO1_3265"/>
<dbReference type="HOGENOM" id="CLU_148518_0_0_6"/>
<dbReference type="Proteomes" id="UP000008216">
    <property type="component" value="Chromosome"/>
</dbReference>
<dbReference type="GO" id="GO:0022627">
    <property type="term" value="C:cytosolic small ribosomal subunit"/>
    <property type="evidence" value="ECO:0007669"/>
    <property type="project" value="TreeGrafter"/>
</dbReference>
<dbReference type="GO" id="GO:0019843">
    <property type="term" value="F:rRNA binding"/>
    <property type="evidence" value="ECO:0007669"/>
    <property type="project" value="UniProtKB-UniRule"/>
</dbReference>
<dbReference type="GO" id="GO:0003735">
    <property type="term" value="F:structural constituent of ribosome"/>
    <property type="evidence" value="ECO:0007669"/>
    <property type="project" value="InterPro"/>
</dbReference>
<dbReference type="GO" id="GO:0006412">
    <property type="term" value="P:translation"/>
    <property type="evidence" value="ECO:0007669"/>
    <property type="project" value="UniProtKB-UniRule"/>
</dbReference>
<dbReference type="CDD" id="cd00353">
    <property type="entry name" value="Ribosomal_S15p_S13e"/>
    <property type="match status" value="1"/>
</dbReference>
<dbReference type="FunFam" id="1.10.287.10:FF:000002">
    <property type="entry name" value="30S ribosomal protein S15"/>
    <property type="match status" value="1"/>
</dbReference>
<dbReference type="Gene3D" id="6.10.250.3130">
    <property type="match status" value="1"/>
</dbReference>
<dbReference type="Gene3D" id="1.10.287.10">
    <property type="entry name" value="S15/NS1, RNA-binding"/>
    <property type="match status" value="1"/>
</dbReference>
<dbReference type="HAMAP" id="MF_01343_B">
    <property type="entry name" value="Ribosomal_uS15_B"/>
    <property type="match status" value="1"/>
</dbReference>
<dbReference type="InterPro" id="IPR000589">
    <property type="entry name" value="Ribosomal_uS15"/>
</dbReference>
<dbReference type="InterPro" id="IPR005290">
    <property type="entry name" value="Ribosomal_uS15_bac-type"/>
</dbReference>
<dbReference type="InterPro" id="IPR009068">
    <property type="entry name" value="uS15_NS1_RNA-bd_sf"/>
</dbReference>
<dbReference type="NCBIfam" id="TIGR00952">
    <property type="entry name" value="S15_bact"/>
    <property type="match status" value="1"/>
</dbReference>
<dbReference type="PANTHER" id="PTHR23321">
    <property type="entry name" value="RIBOSOMAL PROTEIN S15, BACTERIAL AND ORGANELLAR"/>
    <property type="match status" value="1"/>
</dbReference>
<dbReference type="PANTHER" id="PTHR23321:SF26">
    <property type="entry name" value="SMALL RIBOSOMAL SUBUNIT PROTEIN US15M"/>
    <property type="match status" value="1"/>
</dbReference>
<dbReference type="Pfam" id="PF00312">
    <property type="entry name" value="Ribosomal_S15"/>
    <property type="match status" value="1"/>
</dbReference>
<dbReference type="SMART" id="SM01387">
    <property type="entry name" value="Ribosomal_S15"/>
    <property type="match status" value="1"/>
</dbReference>
<dbReference type="SUPFAM" id="SSF47060">
    <property type="entry name" value="S15/NS1 RNA-binding domain"/>
    <property type="match status" value="1"/>
</dbReference>
<dbReference type="PROSITE" id="PS00362">
    <property type="entry name" value="RIBOSOMAL_S15"/>
    <property type="match status" value="1"/>
</dbReference>
<sequence length="89" mass="10269">MSLSTEATAKIVSEFGRDANDTGSTEVQVALLTAQINHLQGHFAEHKKDHHSRRGLLRMVSQRRKLLDYLKRKDVARYTQLIERLGLRR</sequence>
<proteinExistence type="inferred from homology"/>
<keyword id="KW-1185">Reference proteome</keyword>
<keyword id="KW-0687">Ribonucleoprotein</keyword>
<keyword id="KW-0689">Ribosomal protein</keyword>
<keyword id="KW-0694">RNA-binding</keyword>
<keyword id="KW-0699">rRNA-binding</keyword>
<comment type="function">
    <text evidence="1">One of the primary rRNA binding proteins, it binds directly to 16S rRNA where it helps nucleate assembly of the platform of the 30S subunit by binding and bridging several RNA helices of the 16S rRNA.</text>
</comment>
<comment type="function">
    <text evidence="1">Forms an intersubunit bridge (bridge B4) with the 23S rRNA of the 50S subunit in the ribosome.</text>
</comment>
<comment type="subunit">
    <text evidence="1">Part of the 30S ribosomal subunit. Forms a bridge to the 50S subunit in the 70S ribosome, contacting the 23S rRNA.</text>
</comment>
<comment type="similarity">
    <text evidence="1">Belongs to the universal ribosomal protein uS15 family.</text>
</comment>
<gene>
    <name evidence="1" type="primary">rpsO</name>
    <name type="ordered locus">Ecok1_31660</name>
    <name type="ORF">APECO1_3265</name>
</gene>
<organism>
    <name type="scientific">Escherichia coli O1:K1 / APEC</name>
    <dbReference type="NCBI Taxonomy" id="405955"/>
    <lineage>
        <taxon>Bacteria</taxon>
        <taxon>Pseudomonadati</taxon>
        <taxon>Pseudomonadota</taxon>
        <taxon>Gammaproteobacteria</taxon>
        <taxon>Enterobacterales</taxon>
        <taxon>Enterobacteriaceae</taxon>
        <taxon>Escherichia</taxon>
    </lineage>
</organism>